<gene>
    <name evidence="1" type="primary">SLC2A2</name>
    <name evidence="6" type="synonym">GLUT2</name>
</gene>
<keyword id="KW-1003">Cell membrane</keyword>
<keyword id="KW-0325">Glycoprotein</keyword>
<keyword id="KW-0472">Membrane</keyword>
<keyword id="KW-1185">Reference proteome</keyword>
<keyword id="KW-0762">Sugar transport</keyword>
<keyword id="KW-0812">Transmembrane</keyword>
<keyword id="KW-1133">Transmembrane helix</keyword>
<keyword id="KW-0813">Transport</keyword>
<name>GTR2_BOVIN</name>
<sequence length="510" mass="56060">MTEDKVTGTLVLAVFTAVLSSFQFGYDIGVINAPQQVIITHYRHVLGVSLDDRIAINNYALNSTEELPTSLGDPTPVSWAEEETMTSASLITMFWSLSVSSFAVGGMIASFFGGLLGDKLGRIKALLVANILSLVGALLMGFSKLGPSHILIISGRGISGLYCGLISGLIPMYIGEIAPTTLRGAIGALHQLAIVTGILISQIVGLDFILGNHELWHILLGLSAVPAILQCLLLFFCPESPRYLYIKLDEEAKAKKSLKRLRGSDDITKDITEMRKEREEASNEKKVSIIQLFTNASYRQPILVALMLHAAQQFSGINGIFYYSTSIFQTAGISQPVYATIGVGAVNTVFTAVSVFLVEKAGRRSLFLIGMSGMFVCAIFMSVGLVLLSKFPWMNYVSMTAIFLFVSFFEIGPGPIPWFMVAEFFSQGPRPAALAIAAFSNWTGNFIIALCFQYIADFCGPYVFFLLLVWSWPLFCSHFLKFQKPKENPLRKSQQSSERRGVQLKRQKLL</sequence>
<accession>P58351</accession>
<accession>A6QPH3</accession>
<feature type="chain" id="PRO_0000050345" description="Solute carrier family 2, facilitated glucose transporter member 2">
    <location>
        <begin position="1"/>
        <end position="510"/>
    </location>
</feature>
<feature type="topological domain" description="Cytoplasmic" evidence="4">
    <location>
        <begin position="1"/>
        <end position="10"/>
    </location>
</feature>
<feature type="transmembrane region" description="Helical; Name=1" evidence="4">
    <location>
        <begin position="11"/>
        <end position="31"/>
    </location>
</feature>
<feature type="topological domain" description="Extracellular" evidence="4">
    <location>
        <begin position="32"/>
        <end position="96"/>
    </location>
</feature>
<feature type="transmembrane region" description="Helical; Name=2" evidence="4">
    <location>
        <begin position="97"/>
        <end position="117"/>
    </location>
</feature>
<feature type="topological domain" description="Cytoplasmic" evidence="4">
    <location>
        <begin position="118"/>
        <end position="122"/>
    </location>
</feature>
<feature type="transmembrane region" description="Helical; Name=3" evidence="4">
    <location>
        <begin position="123"/>
        <end position="143"/>
    </location>
</feature>
<feature type="topological domain" description="Extracellular" evidence="4">
    <location>
        <begin position="144"/>
        <end position="157"/>
    </location>
</feature>
<feature type="transmembrane region" description="Helical; Name=4" evidence="4">
    <location>
        <begin position="158"/>
        <end position="178"/>
    </location>
</feature>
<feature type="topological domain" description="Cytoplasmic" evidence="4">
    <location>
        <begin position="179"/>
        <end position="191"/>
    </location>
</feature>
<feature type="transmembrane region" description="Helical; Name=5" evidence="4">
    <location>
        <begin position="192"/>
        <end position="212"/>
    </location>
</feature>
<feature type="topological domain" description="Extracellular" evidence="4">
    <location>
        <begin position="213"/>
        <end position="215"/>
    </location>
</feature>
<feature type="transmembrane region" description="Helical; Name=6" evidence="4">
    <location>
        <begin position="216"/>
        <end position="236"/>
    </location>
</feature>
<feature type="topological domain" description="Cytoplasmic" evidence="4">
    <location>
        <begin position="237"/>
        <end position="301"/>
    </location>
</feature>
<feature type="transmembrane region" description="Helical; Name=7" evidence="4">
    <location>
        <begin position="302"/>
        <end position="322"/>
    </location>
</feature>
<feature type="topological domain" description="Extracellular" evidence="4">
    <location>
        <begin position="323"/>
        <end position="336"/>
    </location>
</feature>
<feature type="transmembrane region" description="Helical; Name=8" evidence="4">
    <location>
        <begin position="337"/>
        <end position="357"/>
    </location>
</feature>
<feature type="topological domain" description="Cytoplasmic" evidence="4">
    <location>
        <begin position="358"/>
        <end position="365"/>
    </location>
</feature>
<feature type="transmembrane region" description="Helical; Name=9" evidence="4">
    <location>
        <begin position="366"/>
        <end position="386"/>
    </location>
</feature>
<feature type="topological domain" description="Extracellular" evidence="4">
    <location>
        <begin position="387"/>
        <end position="400"/>
    </location>
</feature>
<feature type="transmembrane region" description="Helical; Name=10" evidence="4">
    <location>
        <begin position="401"/>
        <end position="421"/>
    </location>
</feature>
<feature type="topological domain" description="Cytoplasmic" evidence="4">
    <location>
        <begin position="422"/>
        <end position="431"/>
    </location>
</feature>
<feature type="transmembrane region" description="Helical; Name=11" evidence="4">
    <location>
        <begin position="432"/>
        <end position="452"/>
    </location>
</feature>
<feature type="topological domain" description="Extracellular" evidence="4">
    <location>
        <begin position="453"/>
        <end position="454"/>
    </location>
</feature>
<feature type="transmembrane region" description="Helical; Name=12" evidence="4">
    <location>
        <begin position="455"/>
        <end position="475"/>
    </location>
</feature>
<feature type="topological domain" description="Cytoplasmic" evidence="4">
    <location>
        <begin position="476"/>
        <end position="510"/>
    </location>
</feature>
<feature type="region of interest" description="Disordered" evidence="5">
    <location>
        <begin position="490"/>
        <end position="510"/>
    </location>
</feature>
<feature type="binding site" evidence="2">
    <location>
        <position position="191"/>
    </location>
    <ligand>
        <name>D-glucose</name>
        <dbReference type="ChEBI" id="CHEBI:4167"/>
    </ligand>
</feature>
<feature type="binding site" evidence="2">
    <location>
        <begin position="312"/>
        <end position="313"/>
    </location>
    <ligand>
        <name>D-glucose</name>
        <dbReference type="ChEBI" id="CHEBI:4167"/>
    </ligand>
</feature>
<feature type="binding site" evidence="2">
    <location>
        <position position="318"/>
    </location>
    <ligand>
        <name>D-glucose</name>
        <dbReference type="ChEBI" id="CHEBI:4167"/>
    </ligand>
</feature>
<feature type="binding site" evidence="2">
    <location>
        <position position="347"/>
    </location>
    <ligand>
        <name>D-glucose</name>
        <dbReference type="ChEBI" id="CHEBI:4167"/>
    </ligand>
</feature>
<feature type="binding site" evidence="2">
    <location>
        <position position="410"/>
    </location>
    <ligand>
        <name>D-glucose</name>
        <dbReference type="ChEBI" id="CHEBI:4167"/>
    </ligand>
</feature>
<feature type="binding site" evidence="2">
    <location>
        <position position="418"/>
    </location>
    <ligand>
        <name>D-glucose</name>
        <dbReference type="ChEBI" id="CHEBI:4167"/>
    </ligand>
</feature>
<feature type="glycosylation site" description="N-linked (GlcNAc...) asparagine" evidence="4">
    <location>
        <position position="62"/>
    </location>
</feature>
<feature type="sequence conflict" description="In Ref. 2; AAK63201." evidence="7" ref="2">
    <original>L</original>
    <variation>W</variation>
    <location>
        <position position="258"/>
    </location>
</feature>
<feature type="sequence conflict" description="In Ref. 2; AAK63201." evidence="7" ref="2">
    <original>R</original>
    <variation>G</variation>
    <location>
        <position position="278"/>
    </location>
</feature>
<feature type="sequence conflict" description="In Ref. 2; AAK63201." evidence="7" ref="2">
    <original>N</original>
    <variation>S</variation>
    <location>
        <position position="395"/>
    </location>
</feature>
<comment type="function">
    <text evidence="1">Facilitative hexose transporter that mediates the transport of glucose, fructose and galactose. Likely mediates the bidirectional transfer of glucose across the plasma membrane of hepatocytes and is responsible for uptake of glucose by the beta cells; may comprise part of the glucose-sensing mechanism of the beta cell. May also participate with the Na(+)/glucose cotransporter in the transcellular transport of glucose in the small intestine and kidney. Also able to mediate the transport of dehydroascorbate.</text>
</comment>
<comment type="catalytic activity">
    <reaction evidence="1">
        <text>D-glucose(out) = D-glucose(in)</text>
        <dbReference type="Rhea" id="RHEA:60376"/>
        <dbReference type="ChEBI" id="CHEBI:4167"/>
    </reaction>
</comment>
<comment type="catalytic activity">
    <reaction evidence="1">
        <text>D-fructose(out) = D-fructose(in)</text>
        <dbReference type="Rhea" id="RHEA:60372"/>
        <dbReference type="ChEBI" id="CHEBI:37721"/>
    </reaction>
</comment>
<comment type="catalytic activity">
    <reaction evidence="1">
        <text>L-dehydroascorbate(out) = L-dehydroascorbate(in)</text>
        <dbReference type="Rhea" id="RHEA:60380"/>
        <dbReference type="ChEBI" id="CHEBI:58539"/>
    </reaction>
</comment>
<comment type="catalytic activity">
    <reaction evidence="1">
        <text>D-galactose(in) = D-galactose(out)</text>
        <dbReference type="Rhea" id="RHEA:34915"/>
        <dbReference type="ChEBI" id="CHEBI:4139"/>
    </reaction>
</comment>
<comment type="activity regulation">
    <text evidence="1">D-glucose and maltose competitively inhibit fructose transport. D-glucose, D-fructose and maltose inhibit deoxyglucose transport.</text>
</comment>
<comment type="subcellular location">
    <subcellularLocation>
        <location evidence="1">Cell membrane</location>
        <topology evidence="4">Multi-pass membrane protein</topology>
    </subcellularLocation>
</comment>
<comment type="PTM">
    <text evidence="3">N-glycosylated; required for stability and retention at the cell surface of pancreatic beta cells.</text>
</comment>
<comment type="similarity">
    <text evidence="7">Belongs to the major facilitator superfamily. Sugar transporter (TC 2.A.1.1) family. Glucose transporter subfamily.</text>
</comment>
<evidence type="ECO:0000250" key="1">
    <source>
        <dbReference type="UniProtKB" id="P11168"/>
    </source>
</evidence>
<evidence type="ECO:0000250" key="2">
    <source>
        <dbReference type="UniProtKB" id="P11169"/>
    </source>
</evidence>
<evidence type="ECO:0000250" key="3">
    <source>
        <dbReference type="UniProtKB" id="P14246"/>
    </source>
</evidence>
<evidence type="ECO:0000255" key="4"/>
<evidence type="ECO:0000256" key="5">
    <source>
        <dbReference type="SAM" id="MobiDB-lite"/>
    </source>
</evidence>
<evidence type="ECO:0000303" key="6">
    <source>
    </source>
</evidence>
<evidence type="ECO:0000305" key="7"/>
<dbReference type="EMBL" id="BC149324">
    <property type="protein sequence ID" value="AAI49325.1"/>
    <property type="molecule type" value="mRNA"/>
</dbReference>
<dbReference type="EMBL" id="AF308828">
    <property type="protein sequence ID" value="AAK63201.1"/>
    <property type="molecule type" value="mRNA"/>
</dbReference>
<dbReference type="RefSeq" id="NP_001096692.1">
    <property type="nucleotide sequence ID" value="NM_001103222.1"/>
</dbReference>
<dbReference type="SMR" id="P58351"/>
<dbReference type="FunCoup" id="P58351">
    <property type="interactions" value="456"/>
</dbReference>
<dbReference type="STRING" id="9913.ENSBTAP00000050612"/>
<dbReference type="GlyCosmos" id="P58351">
    <property type="glycosylation" value="1 site, No reported glycans"/>
</dbReference>
<dbReference type="GlyGen" id="P58351">
    <property type="glycosylation" value="1 site"/>
</dbReference>
<dbReference type="PaxDb" id="9913-ENSBTAP00000050612"/>
<dbReference type="GeneID" id="282357"/>
<dbReference type="KEGG" id="bta:282357"/>
<dbReference type="CTD" id="6514"/>
<dbReference type="VEuPathDB" id="HostDB:ENSBTAG00000005386"/>
<dbReference type="eggNOG" id="KOG0569">
    <property type="taxonomic scope" value="Eukaryota"/>
</dbReference>
<dbReference type="HOGENOM" id="CLU_001265_30_5_1"/>
<dbReference type="InParanoid" id="P58351"/>
<dbReference type="OMA" id="VMVVFAC"/>
<dbReference type="OrthoDB" id="4540492at2759"/>
<dbReference type="TreeFam" id="TF313762"/>
<dbReference type="Reactome" id="R-BTA-189200">
    <property type="pathway name" value="Cellular hexose transport"/>
</dbReference>
<dbReference type="Reactome" id="R-BTA-422356">
    <property type="pathway name" value="Regulation of insulin secretion"/>
</dbReference>
<dbReference type="Reactome" id="R-BTA-8981373">
    <property type="pathway name" value="Intestinal hexose absorption"/>
</dbReference>
<dbReference type="Proteomes" id="UP000009136">
    <property type="component" value="Chromosome 1"/>
</dbReference>
<dbReference type="Bgee" id="ENSBTAG00000005386">
    <property type="expression patterns" value="Expressed in liver and 23 other cell types or tissues"/>
</dbReference>
<dbReference type="GO" id="GO:0005903">
    <property type="term" value="C:brush border"/>
    <property type="evidence" value="ECO:0000318"/>
    <property type="project" value="GO_Central"/>
</dbReference>
<dbReference type="GO" id="GO:0005886">
    <property type="term" value="C:plasma membrane"/>
    <property type="evidence" value="ECO:0000250"/>
    <property type="project" value="UniProtKB"/>
</dbReference>
<dbReference type="GO" id="GO:0055056">
    <property type="term" value="F:D-glucose transmembrane transporter activity"/>
    <property type="evidence" value="ECO:0000250"/>
    <property type="project" value="UniProtKB"/>
</dbReference>
<dbReference type="GO" id="GO:0033300">
    <property type="term" value="F:dehydroascorbic acid transmembrane transporter activity"/>
    <property type="evidence" value="ECO:0000250"/>
    <property type="project" value="UniProtKB"/>
</dbReference>
<dbReference type="GO" id="GO:0005353">
    <property type="term" value="F:fructose transmembrane transporter activity"/>
    <property type="evidence" value="ECO:0000250"/>
    <property type="project" value="UniProtKB"/>
</dbReference>
<dbReference type="GO" id="GO:0005354">
    <property type="term" value="F:galactose transmembrane transporter activity"/>
    <property type="evidence" value="ECO:0000250"/>
    <property type="project" value="UniProtKB"/>
</dbReference>
<dbReference type="GO" id="GO:0046323">
    <property type="term" value="P:D-glucose import"/>
    <property type="evidence" value="ECO:0000318"/>
    <property type="project" value="GO_Central"/>
</dbReference>
<dbReference type="GO" id="GO:1904659">
    <property type="term" value="P:D-glucose transmembrane transport"/>
    <property type="evidence" value="ECO:0000250"/>
    <property type="project" value="UniProtKB"/>
</dbReference>
<dbReference type="GO" id="GO:0070837">
    <property type="term" value="P:dehydroascorbic acid transport"/>
    <property type="evidence" value="ECO:0000318"/>
    <property type="project" value="GO_Central"/>
</dbReference>
<dbReference type="GO" id="GO:0015755">
    <property type="term" value="P:fructose transmembrane transport"/>
    <property type="evidence" value="ECO:0000250"/>
    <property type="project" value="UniProtKB"/>
</dbReference>
<dbReference type="GO" id="GO:0015757">
    <property type="term" value="P:galactose transmembrane transport"/>
    <property type="evidence" value="ECO:0000250"/>
    <property type="project" value="UniProtKB"/>
</dbReference>
<dbReference type="CDD" id="cd17431">
    <property type="entry name" value="MFS_GLUT_Class1"/>
    <property type="match status" value="1"/>
</dbReference>
<dbReference type="FunFam" id="1.20.1250.20:FF:000029">
    <property type="entry name" value="solute carrier family 2, facilitated glucose transporter member 4"/>
    <property type="match status" value="1"/>
</dbReference>
<dbReference type="Gene3D" id="1.20.1250.20">
    <property type="entry name" value="MFS general substrate transporter like domains"/>
    <property type="match status" value="1"/>
</dbReference>
<dbReference type="InterPro" id="IPR002440">
    <property type="entry name" value="Glc_transpt_2"/>
</dbReference>
<dbReference type="InterPro" id="IPR045263">
    <property type="entry name" value="GLUT"/>
</dbReference>
<dbReference type="InterPro" id="IPR020846">
    <property type="entry name" value="MFS_dom"/>
</dbReference>
<dbReference type="InterPro" id="IPR005828">
    <property type="entry name" value="MFS_sugar_transport-like"/>
</dbReference>
<dbReference type="InterPro" id="IPR036259">
    <property type="entry name" value="MFS_trans_sf"/>
</dbReference>
<dbReference type="InterPro" id="IPR003663">
    <property type="entry name" value="Sugar/inositol_transpt"/>
</dbReference>
<dbReference type="InterPro" id="IPR005829">
    <property type="entry name" value="Sugar_transporter_CS"/>
</dbReference>
<dbReference type="NCBIfam" id="TIGR00879">
    <property type="entry name" value="SP"/>
    <property type="match status" value="1"/>
</dbReference>
<dbReference type="PANTHER" id="PTHR23503">
    <property type="entry name" value="SOLUTE CARRIER FAMILY 2"/>
    <property type="match status" value="1"/>
</dbReference>
<dbReference type="PANTHER" id="PTHR23503:SF27">
    <property type="entry name" value="SOLUTE CARRIER FAMILY 2, FACILITATED GLUCOSE TRANSPORTER MEMBER 2"/>
    <property type="match status" value="1"/>
</dbReference>
<dbReference type="Pfam" id="PF00083">
    <property type="entry name" value="Sugar_tr"/>
    <property type="match status" value="1"/>
</dbReference>
<dbReference type="PRINTS" id="PR01191">
    <property type="entry name" value="GLUCTRSPORT2"/>
</dbReference>
<dbReference type="PRINTS" id="PR00171">
    <property type="entry name" value="SUGRTRNSPORT"/>
</dbReference>
<dbReference type="SUPFAM" id="SSF103473">
    <property type="entry name" value="MFS general substrate transporter"/>
    <property type="match status" value="1"/>
</dbReference>
<dbReference type="PROSITE" id="PS50850">
    <property type="entry name" value="MFS"/>
    <property type="match status" value="1"/>
</dbReference>
<dbReference type="PROSITE" id="PS00216">
    <property type="entry name" value="SUGAR_TRANSPORT_1"/>
    <property type="match status" value="1"/>
</dbReference>
<dbReference type="PROSITE" id="PS00217">
    <property type="entry name" value="SUGAR_TRANSPORT_2"/>
    <property type="match status" value="1"/>
</dbReference>
<organism>
    <name type="scientific">Bos taurus</name>
    <name type="common">Bovine</name>
    <dbReference type="NCBI Taxonomy" id="9913"/>
    <lineage>
        <taxon>Eukaryota</taxon>
        <taxon>Metazoa</taxon>
        <taxon>Chordata</taxon>
        <taxon>Craniata</taxon>
        <taxon>Vertebrata</taxon>
        <taxon>Euteleostomi</taxon>
        <taxon>Mammalia</taxon>
        <taxon>Eutheria</taxon>
        <taxon>Laurasiatheria</taxon>
        <taxon>Artiodactyla</taxon>
        <taxon>Ruminantia</taxon>
        <taxon>Pecora</taxon>
        <taxon>Bovidae</taxon>
        <taxon>Bovinae</taxon>
        <taxon>Bos</taxon>
    </lineage>
</organism>
<proteinExistence type="evidence at transcript level"/>
<reference key="1">
    <citation type="submission" date="2007-07" db="EMBL/GenBank/DDBJ databases">
        <authorList>
            <consortium name="NIH - Mammalian Gene Collection (MGC) project"/>
        </authorList>
    </citation>
    <scope>NUCLEOTIDE SEQUENCE [LARGE SCALE MRNA]</scope>
    <source>
        <strain>Hereford</strain>
        <tissue>Fetal liver</tissue>
    </source>
</reference>
<reference key="2">
    <citation type="journal article" date="2001" name="Mol. Reprod. Dev.">
        <title>Glucose transporter expression is developmentally regulated in in vitro derived bovine preimplantation embryos.</title>
        <authorList>
            <person name="Augustin R."/>
            <person name="Pocar P."/>
            <person name="Navarrete-Santos A."/>
            <person name="Wrenzycki C."/>
            <person name="Gandolfi F."/>
            <person name="Niemann H."/>
            <person name="Fischer B."/>
        </authorList>
    </citation>
    <scope>NUCLEOTIDE SEQUENCE [MRNA] OF 257-398</scope>
</reference>
<protein>
    <recommendedName>
        <fullName evidence="7">Solute carrier family 2, facilitated glucose transporter member 2</fullName>
    </recommendedName>
    <alternativeName>
        <fullName evidence="1">Glucose transporter type 2, liver</fullName>
        <shortName evidence="6">GLUT-2</shortName>
    </alternativeName>
</protein>